<comment type="function">
    <text evidence="1">Binds 16S rRNA, required for the assembly of 30S particles and may also be responsible for determining the conformation of the 16S rRNA at the A site.</text>
</comment>
<comment type="subunit">
    <text evidence="1">Part of the 30S ribosomal subunit. Contacts proteins S3 and S10.</text>
</comment>
<comment type="similarity">
    <text evidence="1">Belongs to the universal ribosomal protein uS14 family.</text>
</comment>
<name>RS14_YERPG</name>
<proteinExistence type="inferred from homology"/>
<feature type="chain" id="PRO_1000128653" description="Small ribosomal subunit protein uS14">
    <location>
        <begin position="1"/>
        <end position="101"/>
    </location>
</feature>
<feature type="region of interest" description="Disordered" evidence="2">
    <location>
        <begin position="49"/>
        <end position="70"/>
    </location>
</feature>
<feature type="compositionally biased region" description="Polar residues" evidence="2">
    <location>
        <begin position="52"/>
        <end position="68"/>
    </location>
</feature>
<sequence>MAKQSMKAREVVRVKLANKYRAKREELKAIISGVNSSDEDRWDAVLKLQSLPRDSSPSRQRNRCNQTGRPHGFLRKFGLSRIKVRETAMRGEIPGLKKASW</sequence>
<keyword id="KW-0687">Ribonucleoprotein</keyword>
<keyword id="KW-0689">Ribosomal protein</keyword>
<keyword id="KW-0694">RNA-binding</keyword>
<keyword id="KW-0699">rRNA-binding</keyword>
<dbReference type="EMBL" id="CP000901">
    <property type="protein sequence ID" value="ABX85863.1"/>
    <property type="molecule type" value="Genomic_DNA"/>
</dbReference>
<dbReference type="RefSeq" id="WP_002213330.1">
    <property type="nucleotide sequence ID" value="NZ_CP009935.1"/>
</dbReference>
<dbReference type="SMR" id="A9R908"/>
<dbReference type="GeneID" id="96663183"/>
<dbReference type="KEGG" id="ypg:YpAngola_A0596"/>
<dbReference type="PATRIC" id="fig|349746.12.peg.1546"/>
<dbReference type="GO" id="GO:0005737">
    <property type="term" value="C:cytoplasm"/>
    <property type="evidence" value="ECO:0007669"/>
    <property type="project" value="UniProtKB-ARBA"/>
</dbReference>
<dbReference type="GO" id="GO:0015935">
    <property type="term" value="C:small ribosomal subunit"/>
    <property type="evidence" value="ECO:0007669"/>
    <property type="project" value="TreeGrafter"/>
</dbReference>
<dbReference type="GO" id="GO:0019843">
    <property type="term" value="F:rRNA binding"/>
    <property type="evidence" value="ECO:0007669"/>
    <property type="project" value="UniProtKB-UniRule"/>
</dbReference>
<dbReference type="GO" id="GO:0003735">
    <property type="term" value="F:structural constituent of ribosome"/>
    <property type="evidence" value="ECO:0007669"/>
    <property type="project" value="InterPro"/>
</dbReference>
<dbReference type="GO" id="GO:0006412">
    <property type="term" value="P:translation"/>
    <property type="evidence" value="ECO:0007669"/>
    <property type="project" value="UniProtKB-UniRule"/>
</dbReference>
<dbReference type="FunFam" id="1.10.287.1480:FF:000001">
    <property type="entry name" value="30S ribosomal protein S14"/>
    <property type="match status" value="1"/>
</dbReference>
<dbReference type="Gene3D" id="1.10.287.1480">
    <property type="match status" value="1"/>
</dbReference>
<dbReference type="HAMAP" id="MF_00537">
    <property type="entry name" value="Ribosomal_uS14_1"/>
    <property type="match status" value="1"/>
</dbReference>
<dbReference type="InterPro" id="IPR001209">
    <property type="entry name" value="Ribosomal_uS14"/>
</dbReference>
<dbReference type="InterPro" id="IPR023036">
    <property type="entry name" value="Ribosomal_uS14_bac/plastid"/>
</dbReference>
<dbReference type="InterPro" id="IPR018271">
    <property type="entry name" value="Ribosomal_uS14_CS"/>
</dbReference>
<dbReference type="NCBIfam" id="NF006477">
    <property type="entry name" value="PRK08881.1"/>
    <property type="match status" value="1"/>
</dbReference>
<dbReference type="PANTHER" id="PTHR19836">
    <property type="entry name" value="30S RIBOSOMAL PROTEIN S14"/>
    <property type="match status" value="1"/>
</dbReference>
<dbReference type="PANTHER" id="PTHR19836:SF19">
    <property type="entry name" value="SMALL RIBOSOMAL SUBUNIT PROTEIN US14M"/>
    <property type="match status" value="1"/>
</dbReference>
<dbReference type="Pfam" id="PF00253">
    <property type="entry name" value="Ribosomal_S14"/>
    <property type="match status" value="1"/>
</dbReference>
<dbReference type="SUPFAM" id="SSF57716">
    <property type="entry name" value="Glucocorticoid receptor-like (DNA-binding domain)"/>
    <property type="match status" value="1"/>
</dbReference>
<dbReference type="PROSITE" id="PS00527">
    <property type="entry name" value="RIBOSOMAL_S14"/>
    <property type="match status" value="1"/>
</dbReference>
<protein>
    <recommendedName>
        <fullName evidence="1">Small ribosomal subunit protein uS14</fullName>
    </recommendedName>
    <alternativeName>
        <fullName evidence="3">30S ribosomal protein S14</fullName>
    </alternativeName>
</protein>
<reference key="1">
    <citation type="journal article" date="2010" name="J. Bacteriol.">
        <title>Genome sequence of the deep-rooted Yersinia pestis strain Angola reveals new insights into the evolution and pangenome of the plague bacterium.</title>
        <authorList>
            <person name="Eppinger M."/>
            <person name="Worsham P.L."/>
            <person name="Nikolich M.P."/>
            <person name="Riley D.R."/>
            <person name="Sebastian Y."/>
            <person name="Mou S."/>
            <person name="Achtman M."/>
            <person name="Lindler L.E."/>
            <person name="Ravel J."/>
        </authorList>
    </citation>
    <scope>NUCLEOTIDE SEQUENCE [LARGE SCALE GENOMIC DNA]</scope>
    <source>
        <strain>Angola</strain>
    </source>
</reference>
<gene>
    <name evidence="1" type="primary">rpsN</name>
    <name type="ordered locus">YpAngola_A0596</name>
</gene>
<evidence type="ECO:0000255" key="1">
    <source>
        <dbReference type="HAMAP-Rule" id="MF_00537"/>
    </source>
</evidence>
<evidence type="ECO:0000256" key="2">
    <source>
        <dbReference type="SAM" id="MobiDB-lite"/>
    </source>
</evidence>
<evidence type="ECO:0000305" key="3"/>
<accession>A9R908</accession>
<organism>
    <name type="scientific">Yersinia pestis bv. Antiqua (strain Angola)</name>
    <dbReference type="NCBI Taxonomy" id="349746"/>
    <lineage>
        <taxon>Bacteria</taxon>
        <taxon>Pseudomonadati</taxon>
        <taxon>Pseudomonadota</taxon>
        <taxon>Gammaproteobacteria</taxon>
        <taxon>Enterobacterales</taxon>
        <taxon>Yersiniaceae</taxon>
        <taxon>Yersinia</taxon>
    </lineage>
</organism>